<reference key="1">
    <citation type="journal article" date="2006" name="Science">
        <title>The genome of black cottonwood, Populus trichocarpa (Torr. &amp; Gray).</title>
        <authorList>
            <person name="Tuskan G.A."/>
            <person name="Difazio S."/>
            <person name="Jansson S."/>
            <person name="Bohlmann J."/>
            <person name="Grigoriev I."/>
            <person name="Hellsten U."/>
            <person name="Putnam N."/>
            <person name="Ralph S."/>
            <person name="Rombauts S."/>
            <person name="Salamov A."/>
            <person name="Schein J."/>
            <person name="Sterck L."/>
            <person name="Aerts A."/>
            <person name="Bhalerao R.R."/>
            <person name="Bhalerao R.P."/>
            <person name="Blaudez D."/>
            <person name="Boerjan W."/>
            <person name="Brun A."/>
            <person name="Brunner A."/>
            <person name="Busov V."/>
            <person name="Campbell M."/>
            <person name="Carlson J."/>
            <person name="Chalot M."/>
            <person name="Chapman J."/>
            <person name="Chen G.-L."/>
            <person name="Cooper D."/>
            <person name="Coutinho P.M."/>
            <person name="Couturier J."/>
            <person name="Covert S."/>
            <person name="Cronk Q."/>
            <person name="Cunningham R."/>
            <person name="Davis J."/>
            <person name="Degroeve S."/>
            <person name="Dejardin A."/>
            <person name="dePamphilis C.W."/>
            <person name="Detter J."/>
            <person name="Dirks B."/>
            <person name="Dubchak I."/>
            <person name="Duplessis S."/>
            <person name="Ehlting J."/>
            <person name="Ellis B."/>
            <person name="Gendler K."/>
            <person name="Goodstein D."/>
            <person name="Gribskov M."/>
            <person name="Grimwood J."/>
            <person name="Groover A."/>
            <person name="Gunter L."/>
            <person name="Hamberger B."/>
            <person name="Heinze B."/>
            <person name="Helariutta Y."/>
            <person name="Henrissat B."/>
            <person name="Holligan D."/>
            <person name="Holt R."/>
            <person name="Huang W."/>
            <person name="Islam-Faridi N."/>
            <person name="Jones S."/>
            <person name="Jones-Rhoades M."/>
            <person name="Jorgensen R."/>
            <person name="Joshi C."/>
            <person name="Kangasjaervi J."/>
            <person name="Karlsson J."/>
            <person name="Kelleher C."/>
            <person name="Kirkpatrick R."/>
            <person name="Kirst M."/>
            <person name="Kohler A."/>
            <person name="Kalluri U."/>
            <person name="Larimer F."/>
            <person name="Leebens-Mack J."/>
            <person name="Leple J.-C."/>
            <person name="Locascio P."/>
            <person name="Lou Y."/>
            <person name="Lucas S."/>
            <person name="Martin F."/>
            <person name="Montanini B."/>
            <person name="Napoli C."/>
            <person name="Nelson D.R."/>
            <person name="Nelson C."/>
            <person name="Nieminen K."/>
            <person name="Nilsson O."/>
            <person name="Pereda V."/>
            <person name="Peter G."/>
            <person name="Philippe R."/>
            <person name="Pilate G."/>
            <person name="Poliakov A."/>
            <person name="Razumovskaya J."/>
            <person name="Richardson P."/>
            <person name="Rinaldi C."/>
            <person name="Ritland K."/>
            <person name="Rouze P."/>
            <person name="Ryaboy D."/>
            <person name="Schmutz J."/>
            <person name="Schrader J."/>
            <person name="Segerman B."/>
            <person name="Shin H."/>
            <person name="Siddiqui A."/>
            <person name="Sterky F."/>
            <person name="Terry A."/>
            <person name="Tsai C.-J."/>
            <person name="Uberbacher E."/>
            <person name="Unneberg P."/>
            <person name="Vahala J."/>
            <person name="Wall K."/>
            <person name="Wessler S."/>
            <person name="Yang G."/>
            <person name="Yin T."/>
            <person name="Douglas C."/>
            <person name="Marra M."/>
            <person name="Sandberg G."/>
            <person name="Van de Peer Y."/>
            <person name="Rokhsar D.S."/>
        </authorList>
    </citation>
    <scope>NUCLEOTIDE SEQUENCE [LARGE SCALE GENOMIC DNA]</scope>
    <source>
        <strain>cv. Nisqually</strain>
    </source>
</reference>
<reference key="2">
    <citation type="submission" date="2008-12" db="EMBL/GenBank/DDBJ databases">
        <authorList>
            <consortium name="US DOE Joint Genome Institute (JGI-PGF)"/>
            <person name="Grigoriev I.V."/>
            <person name="Terry A."/>
            <person name="Salamov A.A."/>
            <person name="Otillar R."/>
            <person name="Lou Y."/>
            <person name="Lucas S."/>
            <person name="Hammon N."/>
            <person name="Glavina del Rio T."/>
            <person name="Detter J."/>
            <person name="Kalin E."/>
            <person name="Tice H."/>
            <person name="Pitluck S."/>
            <person name="Chapman J."/>
            <person name="Putnam N.H."/>
            <person name="Brunner A."/>
            <person name="Busov V."/>
            <person name="Campbell M."/>
            <person name="Chalot M."/>
            <person name="Covert S."/>
            <person name="Davis J."/>
            <person name="DiFazio S."/>
            <person name="Gribskov M."/>
            <person name="Gunter L."/>
            <person name="Hamberger B."/>
            <person name="Jansson S."/>
            <person name="Joshi C."/>
            <person name="Larimer F."/>
            <person name="Martin F."/>
            <person name="Napoli C."/>
            <person name="Nelson D."/>
            <person name="Ralph S."/>
            <person name="Rombauts S."/>
            <person name="Rouze P."/>
            <person name="Schrader J."/>
            <person name="Tsai C."/>
            <person name="Vahala J."/>
            <person name="Tuskan G."/>
            <person name="Rokhsar D."/>
        </authorList>
    </citation>
    <scope>GENOME REANNOTATION</scope>
    <source>
        <strain>cv. Nisqually</strain>
    </source>
</reference>
<reference key="3">
    <citation type="journal article" date="2012" name="Proc. Natl. Acad. Sci. U.S.A.">
        <title>Homology models guide discovery of diverse enzyme specificities among dipeptide epimerases in the enolase superfamily.</title>
        <authorList>
            <person name="Lukk T."/>
            <person name="Sakai A."/>
            <person name="Kalyanaraman C."/>
            <person name="Brown S.D."/>
            <person name="Imker H.J."/>
            <person name="Song L."/>
            <person name="Fedorov A.A."/>
            <person name="Fedorov E.V."/>
            <person name="Toro R."/>
            <person name="Hillerich B."/>
            <person name="Seidel R."/>
            <person name="Patskovsky Y."/>
            <person name="Vetting M.W."/>
            <person name="Nair S.K."/>
            <person name="Babbitt P.C."/>
            <person name="Almo S.C."/>
            <person name="Gerlt J.A."/>
            <person name="Jacobson M.P."/>
        </authorList>
    </citation>
    <scope>FUNCTION</scope>
    <scope>COFACTOR</scope>
</reference>
<evidence type="ECO:0000250" key="1"/>
<evidence type="ECO:0000269" key="2">
    <source>
    </source>
</evidence>
<evidence type="ECO:0000305" key="3"/>
<name>AXEP_POPTR</name>
<sequence length="421" mass="45553">MLSIGSLCLSLGTTPKPLKPSKTPKPIRKLYATKAMAGSNPKQVSTFEFRDLMETFAVDVKRAENRPLNVPLIAPFTIASSRLDKVENVAIRIELSDGCVGWGEAPILPFVTAEDQSTAMIKAREACELLKNSSSMKLGLVLERVSEILPGHEFASVRAGVEMALIDAVAKSINVPLWILFGGASDSITTDITIPIVSSAEAAELASKYRKQGFQTLKLKVGKNLKEDIEVLQAIRAVHPDCLFILDANEGYKPEEAIEVLEELHKMGVTPILFEQPVHRDDWEGLGHVTHIAKGKYGVSVAADESCRSLVDAKRIIKGNLADVINIKLAKVGVVGGLEIIEEARTSGLDLMIGGMVETRLAMGFAGHLAAGFGCFKFIDLDTPLLLSEDPVLEGYEVSGAVYKFTDAQGHAGFLDWDNVL</sequence>
<protein>
    <recommendedName>
        <fullName>L-Ala-D/L-amino acid epimerase</fullName>
        <ecNumber>5.1.1.-</ecNumber>
    </recommendedName>
    <alternativeName>
        <fullName>L-Ala-D/L-Xxx epimerase</fullName>
    </alternativeName>
</protein>
<feature type="chain" id="PRO_0000429650" description="L-Ala-D/L-amino acid epimerase">
    <location>
        <begin position="1"/>
        <end position="421"/>
    </location>
</feature>
<feature type="binding site" evidence="1">
    <location>
        <position position="193"/>
    </location>
    <ligand>
        <name>substrate</name>
    </ligand>
</feature>
<feature type="binding site" evidence="1">
    <location>
        <begin position="218"/>
        <end position="220"/>
    </location>
    <ligand>
        <name>substrate</name>
    </ligand>
</feature>
<feature type="binding site" evidence="1">
    <location>
        <position position="247"/>
    </location>
    <ligand>
        <name>Mg(2+)</name>
        <dbReference type="ChEBI" id="CHEBI:18420"/>
    </ligand>
</feature>
<feature type="binding site" evidence="1">
    <location>
        <position position="275"/>
    </location>
    <ligand>
        <name>Mg(2+)</name>
        <dbReference type="ChEBI" id="CHEBI:18420"/>
    </ligand>
</feature>
<feature type="binding site" evidence="1">
    <location>
        <position position="304"/>
    </location>
    <ligand>
        <name>Mg(2+)</name>
        <dbReference type="ChEBI" id="CHEBI:18420"/>
    </ligand>
</feature>
<feature type="binding site" evidence="1">
    <location>
        <position position="328"/>
    </location>
    <ligand>
        <name>substrate</name>
    </ligand>
</feature>
<feature type="binding site" evidence="1">
    <location>
        <begin position="380"/>
        <end position="382"/>
    </location>
    <ligand>
        <name>substrate</name>
    </ligand>
</feature>
<accession>B9I2J6</accession>
<gene>
    <name type="ORF">POPTR_0012s05040g</name>
</gene>
<dbReference type="EC" id="5.1.1.-"/>
<dbReference type="EMBL" id="CM009301">
    <property type="protein sequence ID" value="EEE96122.2"/>
    <property type="molecule type" value="Genomic_DNA"/>
</dbReference>
<dbReference type="RefSeq" id="XP_002317902.2">
    <property type="nucleotide sequence ID" value="XM_002317866.2"/>
</dbReference>
<dbReference type="SMR" id="B9I2J6"/>
<dbReference type="STRING" id="3694.B9I2J6"/>
<dbReference type="KEGG" id="pop:7493512"/>
<dbReference type="eggNOG" id="ENOG502QU7C">
    <property type="taxonomic scope" value="Eukaryota"/>
</dbReference>
<dbReference type="HOGENOM" id="CLU_030273_4_1_1"/>
<dbReference type="InParanoid" id="B9I2J6"/>
<dbReference type="OrthoDB" id="17395at2759"/>
<dbReference type="Proteomes" id="UP000006729">
    <property type="component" value="Chromosome 12"/>
</dbReference>
<dbReference type="ExpressionAtlas" id="B9I2J6">
    <property type="expression patterns" value="baseline and differential"/>
</dbReference>
<dbReference type="GO" id="GO:0000287">
    <property type="term" value="F:magnesium ion binding"/>
    <property type="evidence" value="ECO:0000314"/>
    <property type="project" value="UniProtKB"/>
</dbReference>
<dbReference type="GO" id="GO:0016854">
    <property type="term" value="F:racemase and epimerase activity"/>
    <property type="evidence" value="ECO:0000314"/>
    <property type="project" value="UniProtKB"/>
</dbReference>
<dbReference type="GO" id="GO:0016855">
    <property type="term" value="F:racemase and epimerase activity, acting on amino acids and derivatives"/>
    <property type="evidence" value="ECO:0007669"/>
    <property type="project" value="InterPro"/>
</dbReference>
<dbReference type="GO" id="GO:0006518">
    <property type="term" value="P:peptide metabolic process"/>
    <property type="evidence" value="ECO:0000314"/>
    <property type="project" value="UniProtKB"/>
</dbReference>
<dbReference type="CDD" id="cd03319">
    <property type="entry name" value="L-Ala-DL-Glu_epimerase"/>
    <property type="match status" value="1"/>
</dbReference>
<dbReference type="FunFam" id="3.30.390.10:FF:000009">
    <property type="entry name" value="Hydrophobic dipeptide epimerase"/>
    <property type="match status" value="1"/>
</dbReference>
<dbReference type="Gene3D" id="3.20.20.120">
    <property type="entry name" value="Enolase-like C-terminal domain"/>
    <property type="match status" value="1"/>
</dbReference>
<dbReference type="Gene3D" id="3.30.390.10">
    <property type="entry name" value="Enolase-like, N-terminal domain"/>
    <property type="match status" value="1"/>
</dbReference>
<dbReference type="InterPro" id="IPR034603">
    <property type="entry name" value="Dipeptide_epimerase"/>
</dbReference>
<dbReference type="InterPro" id="IPR036849">
    <property type="entry name" value="Enolase-like_C_sf"/>
</dbReference>
<dbReference type="InterPro" id="IPR029017">
    <property type="entry name" value="Enolase-like_N"/>
</dbReference>
<dbReference type="InterPro" id="IPR029065">
    <property type="entry name" value="Enolase_C-like"/>
</dbReference>
<dbReference type="InterPro" id="IPR013342">
    <property type="entry name" value="Mandelate_racemase_C"/>
</dbReference>
<dbReference type="InterPro" id="IPR013341">
    <property type="entry name" value="Mandelate_racemase_N_dom"/>
</dbReference>
<dbReference type="PANTHER" id="PTHR48073:SF2">
    <property type="entry name" value="O-SUCCINYLBENZOATE SYNTHASE"/>
    <property type="match status" value="1"/>
</dbReference>
<dbReference type="PANTHER" id="PTHR48073">
    <property type="entry name" value="O-SUCCINYLBENZOATE SYNTHASE-RELATED"/>
    <property type="match status" value="1"/>
</dbReference>
<dbReference type="Pfam" id="PF13378">
    <property type="entry name" value="MR_MLE_C"/>
    <property type="match status" value="1"/>
</dbReference>
<dbReference type="Pfam" id="PF02746">
    <property type="entry name" value="MR_MLE_N"/>
    <property type="match status" value="1"/>
</dbReference>
<dbReference type="SFLD" id="SFLDS00001">
    <property type="entry name" value="Enolase"/>
    <property type="match status" value="1"/>
</dbReference>
<dbReference type="SFLD" id="SFLDG00180">
    <property type="entry name" value="muconate_cycloisomerase"/>
    <property type="match status" value="1"/>
</dbReference>
<dbReference type="SMART" id="SM00922">
    <property type="entry name" value="MR_MLE"/>
    <property type="match status" value="1"/>
</dbReference>
<dbReference type="SUPFAM" id="SSF51604">
    <property type="entry name" value="Enolase C-terminal domain-like"/>
    <property type="match status" value="1"/>
</dbReference>
<dbReference type="SUPFAM" id="SSF54826">
    <property type="entry name" value="Enolase N-terminal domain-like"/>
    <property type="match status" value="1"/>
</dbReference>
<organism>
    <name type="scientific">Populus trichocarpa</name>
    <name type="common">Western balsam poplar</name>
    <name type="synonym">Populus balsamifera subsp. trichocarpa</name>
    <dbReference type="NCBI Taxonomy" id="3694"/>
    <lineage>
        <taxon>Eukaryota</taxon>
        <taxon>Viridiplantae</taxon>
        <taxon>Streptophyta</taxon>
        <taxon>Embryophyta</taxon>
        <taxon>Tracheophyta</taxon>
        <taxon>Spermatophyta</taxon>
        <taxon>Magnoliopsida</taxon>
        <taxon>eudicotyledons</taxon>
        <taxon>Gunneridae</taxon>
        <taxon>Pentapetalae</taxon>
        <taxon>rosids</taxon>
        <taxon>fabids</taxon>
        <taxon>Malpighiales</taxon>
        <taxon>Salicaceae</taxon>
        <taxon>Saliceae</taxon>
        <taxon>Populus</taxon>
    </lineage>
</organism>
<comment type="function">
    <text evidence="2">Catalyzes the epimerization of various hydrophobic and polar dipeptides. Has epimerase activity with L-Ala-L-Ala, L-Ala-L-Ser, L-Ala-L-Thr and L-Ala-L-Trp (in vitro).</text>
</comment>
<comment type="cofactor">
    <cofactor evidence="2">
        <name>Mg(2+)</name>
        <dbReference type="ChEBI" id="CHEBI:18420"/>
    </cofactor>
    <text evidence="2">Binds 1 Mg(2+) ion per subunit.</text>
</comment>
<comment type="miscellaneous">
    <text>Part of a large, functionally divergent protein family. Protein modeling and substrate docking were used to predict the substrate specificity, prior to biochemical analysis.</text>
</comment>
<comment type="similarity">
    <text evidence="3">Belongs to the mandelate racemase/muconate lactonizing enzyme family.</text>
</comment>
<keyword id="KW-0413">Isomerase</keyword>
<keyword id="KW-0460">Magnesium</keyword>
<keyword id="KW-0479">Metal-binding</keyword>
<keyword id="KW-1185">Reference proteome</keyword>
<proteinExistence type="inferred from homology"/>